<dbReference type="EMBL" id="CP000563">
    <property type="protein sequence ID" value="ABN62510.1"/>
    <property type="molecule type" value="Genomic_DNA"/>
</dbReference>
<dbReference type="SMR" id="A3D6Z7"/>
<dbReference type="STRING" id="325240.Sbal_3028"/>
<dbReference type="KEGG" id="sbl:Sbal_3028"/>
<dbReference type="HOGENOM" id="CLU_130694_5_0_6"/>
<dbReference type="OrthoDB" id="9800587at2"/>
<dbReference type="Proteomes" id="UP000001557">
    <property type="component" value="Chromosome"/>
</dbReference>
<dbReference type="GO" id="GO:0005737">
    <property type="term" value="C:cytoplasm"/>
    <property type="evidence" value="ECO:0007669"/>
    <property type="project" value="TreeGrafter"/>
</dbReference>
<dbReference type="Gene3D" id="3.30.1200.10">
    <property type="entry name" value="YggU-like"/>
    <property type="match status" value="1"/>
</dbReference>
<dbReference type="HAMAP" id="MF_00634">
    <property type="entry name" value="UPF0235"/>
    <property type="match status" value="1"/>
</dbReference>
<dbReference type="InterPro" id="IPR003746">
    <property type="entry name" value="DUF167"/>
</dbReference>
<dbReference type="InterPro" id="IPR036591">
    <property type="entry name" value="YggU-like_sf"/>
</dbReference>
<dbReference type="NCBIfam" id="TIGR00251">
    <property type="entry name" value="DUF167 family protein"/>
    <property type="match status" value="1"/>
</dbReference>
<dbReference type="NCBIfam" id="NF003466">
    <property type="entry name" value="PRK05090.1"/>
    <property type="match status" value="1"/>
</dbReference>
<dbReference type="PANTHER" id="PTHR13420">
    <property type="entry name" value="UPF0235 PROTEIN C15ORF40"/>
    <property type="match status" value="1"/>
</dbReference>
<dbReference type="PANTHER" id="PTHR13420:SF7">
    <property type="entry name" value="UPF0235 PROTEIN C15ORF40"/>
    <property type="match status" value="1"/>
</dbReference>
<dbReference type="Pfam" id="PF02594">
    <property type="entry name" value="DUF167"/>
    <property type="match status" value="1"/>
</dbReference>
<dbReference type="SMART" id="SM01152">
    <property type="entry name" value="DUF167"/>
    <property type="match status" value="1"/>
</dbReference>
<dbReference type="SUPFAM" id="SSF69786">
    <property type="entry name" value="YggU-like"/>
    <property type="match status" value="1"/>
</dbReference>
<reference key="1">
    <citation type="submission" date="2007-02" db="EMBL/GenBank/DDBJ databases">
        <title>Complete sequence of chromosome of Shewanella baltica OS155.</title>
        <authorList>
            <consortium name="US DOE Joint Genome Institute"/>
            <person name="Copeland A."/>
            <person name="Lucas S."/>
            <person name="Lapidus A."/>
            <person name="Barry K."/>
            <person name="Detter J.C."/>
            <person name="Glavina del Rio T."/>
            <person name="Hammon N."/>
            <person name="Israni S."/>
            <person name="Dalin E."/>
            <person name="Tice H."/>
            <person name="Pitluck S."/>
            <person name="Sims D.R."/>
            <person name="Brettin T."/>
            <person name="Bruce D."/>
            <person name="Han C."/>
            <person name="Tapia R."/>
            <person name="Brainard J."/>
            <person name="Schmutz J."/>
            <person name="Larimer F."/>
            <person name="Land M."/>
            <person name="Hauser L."/>
            <person name="Kyrpides N."/>
            <person name="Mikhailova N."/>
            <person name="Brettar I."/>
            <person name="Klappenbach J."/>
            <person name="Konstantinidis K."/>
            <person name="Rodrigues J."/>
            <person name="Tiedje J."/>
            <person name="Richardson P."/>
        </authorList>
    </citation>
    <scope>NUCLEOTIDE SEQUENCE [LARGE SCALE GENOMIC DNA]</scope>
    <source>
        <strain>OS155 / ATCC BAA-1091</strain>
    </source>
</reference>
<sequence>MSAVTLQQGDLLLNLYIQPKASRDQIVGLHGDELKVAITAPPIDGKANAHLSKYLAKTFKVPKSDIHIMKGELGRHKQIRVIDPKIIPSIITELMGQTS</sequence>
<proteinExistence type="inferred from homology"/>
<comment type="similarity">
    <text evidence="1">Belongs to the UPF0235 family.</text>
</comment>
<evidence type="ECO:0000255" key="1">
    <source>
        <dbReference type="HAMAP-Rule" id="MF_00634"/>
    </source>
</evidence>
<organism>
    <name type="scientific">Shewanella baltica (strain OS155 / ATCC BAA-1091)</name>
    <dbReference type="NCBI Taxonomy" id="325240"/>
    <lineage>
        <taxon>Bacteria</taxon>
        <taxon>Pseudomonadati</taxon>
        <taxon>Pseudomonadota</taxon>
        <taxon>Gammaproteobacteria</taxon>
        <taxon>Alteromonadales</taxon>
        <taxon>Shewanellaceae</taxon>
        <taxon>Shewanella</taxon>
    </lineage>
</organism>
<name>Y3028_SHEB5</name>
<keyword id="KW-1185">Reference proteome</keyword>
<protein>
    <recommendedName>
        <fullName evidence="1">UPF0235 protein Sbal_3028</fullName>
    </recommendedName>
</protein>
<gene>
    <name type="ordered locus">Sbal_3028</name>
</gene>
<feature type="chain" id="PRO_1000056787" description="UPF0235 protein Sbal_3028">
    <location>
        <begin position="1"/>
        <end position="99"/>
    </location>
</feature>
<accession>A3D6Z7</accession>